<gene>
    <name type="primary">rps20</name>
</gene>
<protein>
    <recommendedName>
        <fullName evidence="3">Small ribosomal subunit protein uS10</fullName>
    </recommendedName>
    <alternativeName>
        <fullName>40S ribosomal protein S20</fullName>
    </alternativeName>
    <alternativeName>
        <fullName>S22</fullName>
    </alternativeName>
</protein>
<sequence length="119" mass="13356">MAFKDPGKAPVDQEVAIHRIRITLTSRNVKSLEKVCADLIRGAKEKNLKVKGPVRMPTKTLRITTRKTPCGEGSKTWDRFQMRIHKRLIDLHSPSEIVKQITSISIEPGVEVEVTIADA</sequence>
<accession>P23403</accession>
<accession>Q5D0C9</accession>
<reference key="1">
    <citation type="journal article" date="1990" name="J. Biol. Chem.">
        <title>Nucleotide sequence and 40 S subunit assembly of Xenopus laevis ribosomal protein S22.</title>
        <authorList>
            <person name="Keiper B.D."/>
            <person name="Wormington W.M."/>
        </authorList>
    </citation>
    <scope>NUCLEOTIDE SEQUENCE [MRNA]</scope>
    <scope>SUBUNIT</scope>
    <scope>SUBCELLULAR LOCATION</scope>
    <source>
        <tissue>Neurula</tissue>
    </source>
</reference>
<reference key="2">
    <citation type="submission" date="2002-12" db="EMBL/GenBank/DDBJ databases">
        <authorList>
            <consortium name="NIH - Xenopus Gene Collection (XGC) project"/>
        </authorList>
    </citation>
    <scope>NUCLEOTIDE SEQUENCE [LARGE SCALE MRNA]</scope>
    <source>
        <tissue>Embryo</tissue>
    </source>
</reference>
<dbReference type="EMBL" id="M34706">
    <property type="protein sequence ID" value="AAA49953.1"/>
    <property type="molecule type" value="mRNA"/>
</dbReference>
<dbReference type="EMBL" id="BC041524">
    <property type="protein sequence ID" value="AAH41524.1"/>
    <property type="molecule type" value="mRNA"/>
</dbReference>
<dbReference type="PIR" id="A37974">
    <property type="entry name" value="A37974"/>
</dbReference>
<dbReference type="RefSeq" id="NP_001079407.1">
    <property type="nucleotide sequence ID" value="NM_001085938.1"/>
</dbReference>
<dbReference type="PDB" id="7OYC">
    <property type="method" value="EM"/>
    <property type="resolution" value="2.40 A"/>
    <property type="chains" value="U2=1-119"/>
</dbReference>
<dbReference type="PDBsum" id="7OYC"/>
<dbReference type="EMDB" id="EMD-13113"/>
<dbReference type="SMR" id="P23403"/>
<dbReference type="BioGRID" id="97337">
    <property type="interactions" value="2"/>
</dbReference>
<dbReference type="IntAct" id="P23403">
    <property type="interactions" value="1"/>
</dbReference>
<dbReference type="DNASU" id="379094"/>
<dbReference type="GeneID" id="379094"/>
<dbReference type="KEGG" id="xla:379094"/>
<dbReference type="AGR" id="Xenbase:XB-GENE-1001347"/>
<dbReference type="CTD" id="379094"/>
<dbReference type="Xenbase" id="XB-GENE-1001347">
    <property type="gene designation" value="rps20.L"/>
</dbReference>
<dbReference type="OMA" id="IHKRVIH"/>
<dbReference type="OrthoDB" id="10248551at2759"/>
<dbReference type="CD-CODE" id="78E86D56">
    <property type="entry name" value="Mitochondrial cloud"/>
</dbReference>
<dbReference type="Proteomes" id="UP000186698">
    <property type="component" value="Chromosome 6L"/>
</dbReference>
<dbReference type="Bgee" id="379094">
    <property type="expression patterns" value="Expressed in oocyte and 19 other cell types or tissues"/>
</dbReference>
<dbReference type="GO" id="GO:0022627">
    <property type="term" value="C:cytosolic small ribosomal subunit"/>
    <property type="evidence" value="ECO:0000318"/>
    <property type="project" value="GO_Central"/>
</dbReference>
<dbReference type="GO" id="GO:0003723">
    <property type="term" value="F:RNA binding"/>
    <property type="evidence" value="ECO:0007669"/>
    <property type="project" value="InterPro"/>
</dbReference>
<dbReference type="GO" id="GO:0003735">
    <property type="term" value="F:structural constituent of ribosome"/>
    <property type="evidence" value="ECO:0000318"/>
    <property type="project" value="GO_Central"/>
</dbReference>
<dbReference type="GO" id="GO:0006412">
    <property type="term" value="P:translation"/>
    <property type="evidence" value="ECO:0007669"/>
    <property type="project" value="InterPro"/>
</dbReference>
<dbReference type="FunFam" id="3.30.70.600:FF:000011">
    <property type="entry name" value="Uncharacterized protein"/>
    <property type="match status" value="1"/>
</dbReference>
<dbReference type="Gene3D" id="3.30.70.600">
    <property type="entry name" value="Ribosomal protein S10 domain"/>
    <property type="match status" value="1"/>
</dbReference>
<dbReference type="HAMAP" id="MF_00508">
    <property type="entry name" value="Ribosomal_uS10"/>
    <property type="match status" value="1"/>
</dbReference>
<dbReference type="InterPro" id="IPR001848">
    <property type="entry name" value="Ribosomal_uS10"/>
</dbReference>
<dbReference type="InterPro" id="IPR018268">
    <property type="entry name" value="Ribosomal_uS10_CS"/>
</dbReference>
<dbReference type="InterPro" id="IPR027486">
    <property type="entry name" value="Ribosomal_uS10_dom"/>
</dbReference>
<dbReference type="InterPro" id="IPR036838">
    <property type="entry name" value="Ribosomal_uS10_dom_sf"/>
</dbReference>
<dbReference type="InterPro" id="IPR005729">
    <property type="entry name" value="Ribosomal_uS10_euk/arc"/>
</dbReference>
<dbReference type="NCBIfam" id="TIGR01046">
    <property type="entry name" value="uS10_euk_arch"/>
    <property type="match status" value="1"/>
</dbReference>
<dbReference type="PANTHER" id="PTHR11700">
    <property type="entry name" value="30S RIBOSOMAL PROTEIN S10 FAMILY MEMBER"/>
    <property type="match status" value="1"/>
</dbReference>
<dbReference type="Pfam" id="PF00338">
    <property type="entry name" value="Ribosomal_S10"/>
    <property type="match status" value="1"/>
</dbReference>
<dbReference type="PRINTS" id="PR00971">
    <property type="entry name" value="RIBOSOMALS10"/>
</dbReference>
<dbReference type="SMART" id="SM01403">
    <property type="entry name" value="Ribosomal_S10"/>
    <property type="match status" value="1"/>
</dbReference>
<dbReference type="SUPFAM" id="SSF54999">
    <property type="entry name" value="Ribosomal protein S10"/>
    <property type="match status" value="1"/>
</dbReference>
<dbReference type="PROSITE" id="PS00361">
    <property type="entry name" value="RIBOSOMAL_S10"/>
    <property type="match status" value="1"/>
</dbReference>
<name>RS20_XENLA</name>
<evidence type="ECO:0000250" key="1">
    <source>
        <dbReference type="UniProtKB" id="P60866"/>
    </source>
</evidence>
<evidence type="ECO:0000269" key="2">
    <source>
    </source>
</evidence>
<evidence type="ECO:0000305" key="3"/>
<proteinExistence type="evidence at protein level"/>
<keyword id="KW-0002">3D-structure</keyword>
<keyword id="KW-0963">Cytoplasm</keyword>
<keyword id="KW-1185">Reference proteome</keyword>
<keyword id="KW-0687">Ribonucleoprotein</keyword>
<keyword id="KW-0689">Ribosomal protein</keyword>
<comment type="function">
    <text evidence="1">Component of the small ribosomal subunit (By similarity). The ribosome is a large ribonucleoprotein complex responsible for the synthesis of proteins in the cell (By similarity).</text>
</comment>
<comment type="subunit">
    <text evidence="2">Component of the 40S small ribosomal subunit.</text>
</comment>
<comment type="subcellular location">
    <subcellularLocation>
        <location evidence="2">Cytoplasm</location>
    </subcellularLocation>
</comment>
<comment type="similarity">
    <text evidence="3">Belongs to the universal ribosomal protein uS10 family.</text>
</comment>
<organism>
    <name type="scientific">Xenopus laevis</name>
    <name type="common">African clawed frog</name>
    <dbReference type="NCBI Taxonomy" id="8355"/>
    <lineage>
        <taxon>Eukaryota</taxon>
        <taxon>Metazoa</taxon>
        <taxon>Chordata</taxon>
        <taxon>Craniata</taxon>
        <taxon>Vertebrata</taxon>
        <taxon>Euteleostomi</taxon>
        <taxon>Amphibia</taxon>
        <taxon>Batrachia</taxon>
        <taxon>Anura</taxon>
        <taxon>Pipoidea</taxon>
        <taxon>Pipidae</taxon>
        <taxon>Xenopodinae</taxon>
        <taxon>Xenopus</taxon>
        <taxon>Xenopus</taxon>
    </lineage>
</organism>
<feature type="chain" id="PRO_0000146686" description="Small ribosomal subunit protein uS10">
    <location>
        <begin position="1"/>
        <end position="119"/>
    </location>
</feature>